<accession>Q8PJE5</accession>
<sequence length="792" mass="85093">MKFSENWLRSHVPIQATRDELSATLTAIGLEVEEVTPLGESLGQVVVARIVEAVRHPEADRLQVCSVDAGQGELMQIVCGAPNARAGLVAPLALVGAKIGELTITAAKLRGVASNGMLCSAKELGLDSDASGLFELPDDAPVGQALAEYLGLPDASIEIKLTPNRADCFSVRGIAFDVAAACASEVVAFDAVAVAPVSTRSLAVELDAGKDAPRYCGRVIEGIDPAAKTPVWLAERLRRSGVRPVSLLVDITQYVMLELGQPMHAFDLETLHGPIGVRRSRAGEQLALLDGRQVTLDDSFLTITDAGRAVALAGLMGGLDTRVTETTRNVFLESAYFDPAAIMGRGRKLGLHTDAGHRFERGVDPALPPQAIEVATRLVLELAGGTPGPVVHAQLPEHLPQPVHIRLRRARIARVLGIQIDDADVVRMLRALGMHVEAVAEGWEVMAPSRRFDIAIEEDLIEELARIHGYDRVPTTLPGGASRIAMPSETQLDELSVRRQLVARELQETINYAFVDAALLERWQLTEGLVPLANPLSAELAIMRPRLLPGLVATLGRNAARQAGRVRLFELGKVFAAAADTGAAPGESQHVAAAVCGDALALQWGEPARKVDFHDLKGDLMALAAASGAQLEFQPSTQPFGHPGRSADIYREGVCIGWIGQVHPRLAKALDIDVDVIAFELQLMPLVQRTLPRAGELSRFPSVRRDLAFLVPDEVSWAAVSASVRTTVGPLLREVQLFDRYVGQGVEPGFKSLAMGLILQDNSRTLTDRDVDAVVADVVAVIEREHRARIRS</sequence>
<keyword id="KW-0030">Aminoacyl-tRNA synthetase</keyword>
<keyword id="KW-0067">ATP-binding</keyword>
<keyword id="KW-0963">Cytoplasm</keyword>
<keyword id="KW-0436">Ligase</keyword>
<keyword id="KW-0460">Magnesium</keyword>
<keyword id="KW-0479">Metal-binding</keyword>
<keyword id="KW-0547">Nucleotide-binding</keyword>
<keyword id="KW-0648">Protein biosynthesis</keyword>
<keyword id="KW-0694">RNA-binding</keyword>
<keyword id="KW-0820">tRNA-binding</keyword>
<evidence type="ECO:0000255" key="1">
    <source>
        <dbReference type="HAMAP-Rule" id="MF_00283"/>
    </source>
</evidence>
<feature type="chain" id="PRO_0000126988" description="Phenylalanine--tRNA ligase beta subunit">
    <location>
        <begin position="1"/>
        <end position="792"/>
    </location>
</feature>
<feature type="domain" description="tRNA-binding" evidence="1">
    <location>
        <begin position="39"/>
        <end position="147"/>
    </location>
</feature>
<feature type="domain" description="B5" evidence="1">
    <location>
        <begin position="400"/>
        <end position="475"/>
    </location>
</feature>
<feature type="domain" description="FDX-ACB" evidence="1">
    <location>
        <begin position="698"/>
        <end position="791"/>
    </location>
</feature>
<feature type="binding site" evidence="1">
    <location>
        <position position="453"/>
    </location>
    <ligand>
        <name>Mg(2+)</name>
        <dbReference type="ChEBI" id="CHEBI:18420"/>
        <note>shared with alpha subunit</note>
    </ligand>
</feature>
<feature type="binding site" evidence="1">
    <location>
        <position position="459"/>
    </location>
    <ligand>
        <name>Mg(2+)</name>
        <dbReference type="ChEBI" id="CHEBI:18420"/>
        <note>shared with alpha subunit</note>
    </ligand>
</feature>
<feature type="binding site" evidence="1">
    <location>
        <position position="462"/>
    </location>
    <ligand>
        <name>Mg(2+)</name>
        <dbReference type="ChEBI" id="CHEBI:18420"/>
        <note>shared with alpha subunit</note>
    </ligand>
</feature>
<feature type="binding site" evidence="1">
    <location>
        <position position="463"/>
    </location>
    <ligand>
        <name>Mg(2+)</name>
        <dbReference type="ChEBI" id="CHEBI:18420"/>
        <note>shared with alpha subunit</note>
    </ligand>
</feature>
<name>SYFB_XANAC</name>
<organism>
    <name type="scientific">Xanthomonas axonopodis pv. citri (strain 306)</name>
    <dbReference type="NCBI Taxonomy" id="190486"/>
    <lineage>
        <taxon>Bacteria</taxon>
        <taxon>Pseudomonadati</taxon>
        <taxon>Pseudomonadota</taxon>
        <taxon>Gammaproteobacteria</taxon>
        <taxon>Lysobacterales</taxon>
        <taxon>Lysobacteraceae</taxon>
        <taxon>Xanthomonas</taxon>
    </lineage>
</organism>
<dbReference type="EC" id="6.1.1.20" evidence="1"/>
<dbReference type="EMBL" id="AE008923">
    <property type="protein sequence ID" value="AAM37438.1"/>
    <property type="molecule type" value="Genomic_DNA"/>
</dbReference>
<dbReference type="RefSeq" id="WP_011051692.1">
    <property type="nucleotide sequence ID" value="NC_003919.1"/>
</dbReference>
<dbReference type="SMR" id="Q8PJE5"/>
<dbReference type="GeneID" id="66911697"/>
<dbReference type="KEGG" id="xac:XAC2589"/>
<dbReference type="eggNOG" id="COG0072">
    <property type="taxonomic scope" value="Bacteria"/>
</dbReference>
<dbReference type="eggNOG" id="COG0073">
    <property type="taxonomic scope" value="Bacteria"/>
</dbReference>
<dbReference type="HOGENOM" id="CLU_016891_0_0_6"/>
<dbReference type="Proteomes" id="UP000000576">
    <property type="component" value="Chromosome"/>
</dbReference>
<dbReference type="GO" id="GO:0009328">
    <property type="term" value="C:phenylalanine-tRNA ligase complex"/>
    <property type="evidence" value="ECO:0007669"/>
    <property type="project" value="TreeGrafter"/>
</dbReference>
<dbReference type="GO" id="GO:0005524">
    <property type="term" value="F:ATP binding"/>
    <property type="evidence" value="ECO:0007669"/>
    <property type="project" value="UniProtKB-UniRule"/>
</dbReference>
<dbReference type="GO" id="GO:0000287">
    <property type="term" value="F:magnesium ion binding"/>
    <property type="evidence" value="ECO:0007669"/>
    <property type="project" value="UniProtKB-UniRule"/>
</dbReference>
<dbReference type="GO" id="GO:0004826">
    <property type="term" value="F:phenylalanine-tRNA ligase activity"/>
    <property type="evidence" value="ECO:0007669"/>
    <property type="project" value="UniProtKB-UniRule"/>
</dbReference>
<dbReference type="GO" id="GO:0000049">
    <property type="term" value="F:tRNA binding"/>
    <property type="evidence" value="ECO:0007669"/>
    <property type="project" value="UniProtKB-KW"/>
</dbReference>
<dbReference type="GO" id="GO:0006432">
    <property type="term" value="P:phenylalanyl-tRNA aminoacylation"/>
    <property type="evidence" value="ECO:0007669"/>
    <property type="project" value="UniProtKB-UniRule"/>
</dbReference>
<dbReference type="CDD" id="cd00769">
    <property type="entry name" value="PheRS_beta_core"/>
    <property type="match status" value="1"/>
</dbReference>
<dbReference type="CDD" id="cd02796">
    <property type="entry name" value="tRNA_bind_bactPheRS"/>
    <property type="match status" value="1"/>
</dbReference>
<dbReference type="FunFam" id="2.40.50.140:FF:000045">
    <property type="entry name" value="Phenylalanine--tRNA ligase beta subunit"/>
    <property type="match status" value="1"/>
</dbReference>
<dbReference type="FunFam" id="3.30.56.10:FF:000002">
    <property type="entry name" value="Phenylalanine--tRNA ligase beta subunit"/>
    <property type="match status" value="1"/>
</dbReference>
<dbReference type="FunFam" id="3.30.70.380:FF:000001">
    <property type="entry name" value="Phenylalanine--tRNA ligase beta subunit"/>
    <property type="match status" value="1"/>
</dbReference>
<dbReference type="FunFam" id="3.30.930.10:FF:000022">
    <property type="entry name" value="Phenylalanine--tRNA ligase beta subunit"/>
    <property type="match status" value="1"/>
</dbReference>
<dbReference type="FunFam" id="3.50.40.10:FF:000001">
    <property type="entry name" value="Phenylalanine--tRNA ligase beta subunit"/>
    <property type="match status" value="1"/>
</dbReference>
<dbReference type="Gene3D" id="3.30.56.10">
    <property type="match status" value="2"/>
</dbReference>
<dbReference type="Gene3D" id="3.30.930.10">
    <property type="entry name" value="Bira Bifunctional Protein, Domain 2"/>
    <property type="match status" value="1"/>
</dbReference>
<dbReference type="Gene3D" id="3.30.70.380">
    <property type="entry name" value="Ferrodoxin-fold anticodon-binding domain"/>
    <property type="match status" value="1"/>
</dbReference>
<dbReference type="Gene3D" id="2.40.50.140">
    <property type="entry name" value="Nucleic acid-binding proteins"/>
    <property type="match status" value="1"/>
</dbReference>
<dbReference type="Gene3D" id="3.50.40.10">
    <property type="entry name" value="Phenylalanyl-trna Synthetase, Chain B, domain 3"/>
    <property type="match status" value="1"/>
</dbReference>
<dbReference type="HAMAP" id="MF_00283">
    <property type="entry name" value="Phe_tRNA_synth_beta1"/>
    <property type="match status" value="1"/>
</dbReference>
<dbReference type="InterPro" id="IPR045864">
    <property type="entry name" value="aa-tRNA-synth_II/BPL/LPL"/>
</dbReference>
<dbReference type="InterPro" id="IPR005146">
    <property type="entry name" value="B3/B4_tRNA-bd"/>
</dbReference>
<dbReference type="InterPro" id="IPR009061">
    <property type="entry name" value="DNA-bd_dom_put_sf"/>
</dbReference>
<dbReference type="InterPro" id="IPR005121">
    <property type="entry name" value="Fdx_antiC-bd"/>
</dbReference>
<dbReference type="InterPro" id="IPR036690">
    <property type="entry name" value="Fdx_antiC-bd_sf"/>
</dbReference>
<dbReference type="InterPro" id="IPR012340">
    <property type="entry name" value="NA-bd_OB-fold"/>
</dbReference>
<dbReference type="InterPro" id="IPR045060">
    <property type="entry name" value="Phe-tRNA-ligase_IIc_bsu"/>
</dbReference>
<dbReference type="InterPro" id="IPR004532">
    <property type="entry name" value="Phe-tRNA-ligase_IIc_bsu_bact"/>
</dbReference>
<dbReference type="InterPro" id="IPR020825">
    <property type="entry name" value="Phe-tRNA_synthase-like_B3/B4"/>
</dbReference>
<dbReference type="InterPro" id="IPR041616">
    <property type="entry name" value="PheRS_beta_core"/>
</dbReference>
<dbReference type="InterPro" id="IPR002547">
    <property type="entry name" value="tRNA-bd_dom"/>
</dbReference>
<dbReference type="InterPro" id="IPR033714">
    <property type="entry name" value="tRNA_bind_bactPheRS"/>
</dbReference>
<dbReference type="InterPro" id="IPR005147">
    <property type="entry name" value="tRNA_synthase_B5-dom"/>
</dbReference>
<dbReference type="NCBIfam" id="TIGR00472">
    <property type="entry name" value="pheT_bact"/>
    <property type="match status" value="1"/>
</dbReference>
<dbReference type="NCBIfam" id="NF045760">
    <property type="entry name" value="YtpR"/>
    <property type="match status" value="1"/>
</dbReference>
<dbReference type="PANTHER" id="PTHR10947:SF0">
    <property type="entry name" value="PHENYLALANINE--TRNA LIGASE BETA SUBUNIT"/>
    <property type="match status" value="1"/>
</dbReference>
<dbReference type="PANTHER" id="PTHR10947">
    <property type="entry name" value="PHENYLALANYL-TRNA SYNTHETASE BETA CHAIN AND LEUCINE-RICH REPEAT-CONTAINING PROTEIN 47"/>
    <property type="match status" value="1"/>
</dbReference>
<dbReference type="Pfam" id="PF03483">
    <property type="entry name" value="B3_4"/>
    <property type="match status" value="1"/>
</dbReference>
<dbReference type="Pfam" id="PF03484">
    <property type="entry name" value="B5"/>
    <property type="match status" value="1"/>
</dbReference>
<dbReference type="Pfam" id="PF03147">
    <property type="entry name" value="FDX-ACB"/>
    <property type="match status" value="1"/>
</dbReference>
<dbReference type="Pfam" id="PF01588">
    <property type="entry name" value="tRNA_bind"/>
    <property type="match status" value="1"/>
</dbReference>
<dbReference type="Pfam" id="PF17759">
    <property type="entry name" value="tRNA_synthFbeta"/>
    <property type="match status" value="1"/>
</dbReference>
<dbReference type="SMART" id="SM00873">
    <property type="entry name" value="B3_4"/>
    <property type="match status" value="1"/>
</dbReference>
<dbReference type="SMART" id="SM00874">
    <property type="entry name" value="B5"/>
    <property type="match status" value="1"/>
</dbReference>
<dbReference type="SMART" id="SM00896">
    <property type="entry name" value="FDX-ACB"/>
    <property type="match status" value="1"/>
</dbReference>
<dbReference type="SUPFAM" id="SSF54991">
    <property type="entry name" value="Anticodon-binding domain of PheRS"/>
    <property type="match status" value="1"/>
</dbReference>
<dbReference type="SUPFAM" id="SSF55681">
    <property type="entry name" value="Class II aaRS and biotin synthetases"/>
    <property type="match status" value="1"/>
</dbReference>
<dbReference type="SUPFAM" id="SSF50249">
    <property type="entry name" value="Nucleic acid-binding proteins"/>
    <property type="match status" value="1"/>
</dbReference>
<dbReference type="SUPFAM" id="SSF56037">
    <property type="entry name" value="PheT/TilS domain"/>
    <property type="match status" value="1"/>
</dbReference>
<dbReference type="SUPFAM" id="SSF46955">
    <property type="entry name" value="Putative DNA-binding domain"/>
    <property type="match status" value="1"/>
</dbReference>
<dbReference type="PROSITE" id="PS51483">
    <property type="entry name" value="B5"/>
    <property type="match status" value="1"/>
</dbReference>
<dbReference type="PROSITE" id="PS51447">
    <property type="entry name" value="FDX_ACB"/>
    <property type="match status" value="1"/>
</dbReference>
<dbReference type="PROSITE" id="PS50886">
    <property type="entry name" value="TRBD"/>
    <property type="match status" value="1"/>
</dbReference>
<comment type="catalytic activity">
    <reaction evidence="1">
        <text>tRNA(Phe) + L-phenylalanine + ATP = L-phenylalanyl-tRNA(Phe) + AMP + diphosphate + H(+)</text>
        <dbReference type="Rhea" id="RHEA:19413"/>
        <dbReference type="Rhea" id="RHEA-COMP:9668"/>
        <dbReference type="Rhea" id="RHEA-COMP:9699"/>
        <dbReference type="ChEBI" id="CHEBI:15378"/>
        <dbReference type="ChEBI" id="CHEBI:30616"/>
        <dbReference type="ChEBI" id="CHEBI:33019"/>
        <dbReference type="ChEBI" id="CHEBI:58095"/>
        <dbReference type="ChEBI" id="CHEBI:78442"/>
        <dbReference type="ChEBI" id="CHEBI:78531"/>
        <dbReference type="ChEBI" id="CHEBI:456215"/>
        <dbReference type="EC" id="6.1.1.20"/>
    </reaction>
</comment>
<comment type="cofactor">
    <cofactor evidence="1">
        <name>Mg(2+)</name>
        <dbReference type="ChEBI" id="CHEBI:18420"/>
    </cofactor>
    <text evidence="1">Binds 2 magnesium ions per tetramer.</text>
</comment>
<comment type="subunit">
    <text evidence="1">Tetramer of two alpha and two beta subunits.</text>
</comment>
<comment type="subcellular location">
    <subcellularLocation>
        <location evidence="1">Cytoplasm</location>
    </subcellularLocation>
</comment>
<comment type="similarity">
    <text evidence="1">Belongs to the phenylalanyl-tRNA synthetase beta subunit family. Type 1 subfamily.</text>
</comment>
<gene>
    <name evidence="1" type="primary">pheT</name>
    <name type="ordered locus">XAC2589</name>
</gene>
<protein>
    <recommendedName>
        <fullName evidence="1">Phenylalanine--tRNA ligase beta subunit</fullName>
        <ecNumber evidence="1">6.1.1.20</ecNumber>
    </recommendedName>
    <alternativeName>
        <fullName evidence="1">Phenylalanyl-tRNA synthetase beta subunit</fullName>
        <shortName evidence="1">PheRS</shortName>
    </alternativeName>
</protein>
<proteinExistence type="inferred from homology"/>
<reference key="1">
    <citation type="journal article" date="2002" name="Nature">
        <title>Comparison of the genomes of two Xanthomonas pathogens with differing host specificities.</title>
        <authorList>
            <person name="da Silva A.C.R."/>
            <person name="Ferro J.A."/>
            <person name="Reinach F.C."/>
            <person name="Farah C.S."/>
            <person name="Furlan L.R."/>
            <person name="Quaggio R.B."/>
            <person name="Monteiro-Vitorello C.B."/>
            <person name="Van Sluys M.A."/>
            <person name="Almeida N.F. Jr."/>
            <person name="Alves L.M.C."/>
            <person name="do Amaral A.M."/>
            <person name="Bertolini M.C."/>
            <person name="Camargo L.E.A."/>
            <person name="Camarotte G."/>
            <person name="Cannavan F."/>
            <person name="Cardozo J."/>
            <person name="Chambergo F."/>
            <person name="Ciapina L.P."/>
            <person name="Cicarelli R.M.B."/>
            <person name="Coutinho L.L."/>
            <person name="Cursino-Santos J.R."/>
            <person name="El-Dorry H."/>
            <person name="Faria J.B."/>
            <person name="Ferreira A.J.S."/>
            <person name="Ferreira R.C.C."/>
            <person name="Ferro M.I.T."/>
            <person name="Formighieri E.F."/>
            <person name="Franco M.C."/>
            <person name="Greggio C.C."/>
            <person name="Gruber A."/>
            <person name="Katsuyama A.M."/>
            <person name="Kishi L.T."/>
            <person name="Leite R.P."/>
            <person name="Lemos E.G.M."/>
            <person name="Lemos M.V.F."/>
            <person name="Locali E.C."/>
            <person name="Machado M.A."/>
            <person name="Madeira A.M.B.N."/>
            <person name="Martinez-Rossi N.M."/>
            <person name="Martins E.C."/>
            <person name="Meidanis J."/>
            <person name="Menck C.F.M."/>
            <person name="Miyaki C.Y."/>
            <person name="Moon D.H."/>
            <person name="Moreira L.M."/>
            <person name="Novo M.T.M."/>
            <person name="Okura V.K."/>
            <person name="Oliveira M.C."/>
            <person name="Oliveira V.R."/>
            <person name="Pereira H.A."/>
            <person name="Rossi A."/>
            <person name="Sena J.A.D."/>
            <person name="Silva C."/>
            <person name="de Souza R.F."/>
            <person name="Spinola L.A.F."/>
            <person name="Takita M.A."/>
            <person name="Tamura R.E."/>
            <person name="Teixeira E.C."/>
            <person name="Tezza R.I.D."/>
            <person name="Trindade dos Santos M."/>
            <person name="Truffi D."/>
            <person name="Tsai S.M."/>
            <person name="White F.F."/>
            <person name="Setubal J.C."/>
            <person name="Kitajima J.P."/>
        </authorList>
    </citation>
    <scope>NUCLEOTIDE SEQUENCE [LARGE SCALE GENOMIC DNA]</scope>
    <source>
        <strain>306</strain>
    </source>
</reference>